<comment type="function">
    <text evidence="1">Catalyzes the excretion of spermidine.</text>
</comment>
<comment type="subunit">
    <text evidence="1">Forms a complex with MdtI.</text>
</comment>
<comment type="subcellular location">
    <subcellularLocation>
        <location evidence="1">Cell inner membrane</location>
        <topology evidence="1">Multi-pass membrane protein</topology>
    </subcellularLocation>
</comment>
<comment type="similarity">
    <text evidence="1">Belongs to the drug/metabolite transporter (DMT) superfamily. Small multidrug resistance (SMR) (TC 2.A.7.1) family. MdtJ subfamily.</text>
</comment>
<organism>
    <name type="scientific">Yersinia pestis bv. Antiqua (strain Antiqua)</name>
    <dbReference type="NCBI Taxonomy" id="360102"/>
    <lineage>
        <taxon>Bacteria</taxon>
        <taxon>Pseudomonadati</taxon>
        <taxon>Pseudomonadota</taxon>
        <taxon>Gammaproteobacteria</taxon>
        <taxon>Enterobacterales</taxon>
        <taxon>Yersiniaceae</taxon>
        <taxon>Yersinia</taxon>
    </lineage>
</organism>
<evidence type="ECO:0000255" key="1">
    <source>
        <dbReference type="HAMAP-Rule" id="MF_01598"/>
    </source>
</evidence>
<evidence type="ECO:0000256" key="2">
    <source>
        <dbReference type="SAM" id="MobiDB-lite"/>
    </source>
</evidence>
<gene>
    <name evidence="1" type="primary">mdtJ</name>
    <name type="ordered locus">YPA_1451</name>
</gene>
<reference key="1">
    <citation type="journal article" date="2006" name="J. Bacteriol.">
        <title>Complete genome sequence of Yersinia pestis strains Antiqua and Nepal516: evidence of gene reduction in an emerging pathogen.</title>
        <authorList>
            <person name="Chain P.S.G."/>
            <person name="Hu P."/>
            <person name="Malfatti S.A."/>
            <person name="Radnedge L."/>
            <person name="Larimer F."/>
            <person name="Vergez L.M."/>
            <person name="Worsham P."/>
            <person name="Chu M.C."/>
            <person name="Andersen G.L."/>
        </authorList>
    </citation>
    <scope>NUCLEOTIDE SEQUENCE [LARGE SCALE GENOMIC DNA]</scope>
    <source>
        <strain>Antiqua</strain>
    </source>
</reference>
<proteinExistence type="inferred from homology"/>
<name>MDTJ_YERPA</name>
<sequence>MIYWIFLGLAIIAEIIGTLSMKYASVSGEMTGHIVMYFMITGSYVMLSLAVKKVALGVAYALWEGIGILIITIFSVMWFGETLSPLKIAGLVTLIGGILLVKSGTRKPKQPNCHRGNRPPSVQELKTQTTGHHKGVAVESGEHHAAA</sequence>
<keyword id="KW-0997">Cell inner membrane</keyword>
<keyword id="KW-1003">Cell membrane</keyword>
<keyword id="KW-0472">Membrane</keyword>
<keyword id="KW-0812">Transmembrane</keyword>
<keyword id="KW-1133">Transmembrane helix</keyword>
<keyword id="KW-0813">Transport</keyword>
<protein>
    <recommendedName>
        <fullName evidence="1">Spermidine export protein MdtJ</fullName>
    </recommendedName>
</protein>
<accession>Q1C804</accession>
<dbReference type="EMBL" id="CP000308">
    <property type="protein sequence ID" value="ABG13418.1"/>
    <property type="molecule type" value="Genomic_DNA"/>
</dbReference>
<dbReference type="RefSeq" id="WP_002211188.1">
    <property type="nucleotide sequence ID" value="NZ_CP009906.1"/>
</dbReference>
<dbReference type="SMR" id="Q1C804"/>
<dbReference type="GeneID" id="57976593"/>
<dbReference type="KEGG" id="ypa:YPA_1451"/>
<dbReference type="Proteomes" id="UP000001971">
    <property type="component" value="Chromosome"/>
</dbReference>
<dbReference type="GO" id="GO:0005886">
    <property type="term" value="C:plasma membrane"/>
    <property type="evidence" value="ECO:0007669"/>
    <property type="project" value="UniProtKB-SubCell"/>
</dbReference>
<dbReference type="GO" id="GO:0015199">
    <property type="term" value="F:amino-acid betaine transmembrane transporter activity"/>
    <property type="evidence" value="ECO:0007669"/>
    <property type="project" value="TreeGrafter"/>
</dbReference>
<dbReference type="GO" id="GO:0015297">
    <property type="term" value="F:antiporter activity"/>
    <property type="evidence" value="ECO:0007669"/>
    <property type="project" value="TreeGrafter"/>
</dbReference>
<dbReference type="GO" id="GO:0015220">
    <property type="term" value="F:choline transmembrane transporter activity"/>
    <property type="evidence" value="ECO:0007669"/>
    <property type="project" value="TreeGrafter"/>
</dbReference>
<dbReference type="GO" id="GO:0015606">
    <property type="term" value="F:spermidine transmembrane transporter activity"/>
    <property type="evidence" value="ECO:0007669"/>
    <property type="project" value="UniProtKB-UniRule"/>
</dbReference>
<dbReference type="GO" id="GO:0031460">
    <property type="term" value="P:glycine betaine transport"/>
    <property type="evidence" value="ECO:0007669"/>
    <property type="project" value="TreeGrafter"/>
</dbReference>
<dbReference type="FunFam" id="1.10.3730.20:FF:000001">
    <property type="entry name" value="Quaternary ammonium compound resistance transporter SugE"/>
    <property type="match status" value="1"/>
</dbReference>
<dbReference type="Gene3D" id="1.10.3730.20">
    <property type="match status" value="1"/>
</dbReference>
<dbReference type="HAMAP" id="MF_01598">
    <property type="entry name" value="MdtJ"/>
    <property type="match status" value="1"/>
</dbReference>
<dbReference type="InterPro" id="IPR000390">
    <property type="entry name" value="Small_drug/metabolite_transptr"/>
</dbReference>
<dbReference type="InterPro" id="IPR045324">
    <property type="entry name" value="Small_multidrug_res"/>
</dbReference>
<dbReference type="InterPro" id="IPR023740">
    <property type="entry name" value="Spermidine_export_MdtJ"/>
</dbReference>
<dbReference type="NCBIfam" id="NF007767">
    <property type="entry name" value="PRK10452.1"/>
    <property type="match status" value="1"/>
</dbReference>
<dbReference type="PANTHER" id="PTHR30561">
    <property type="entry name" value="SMR FAMILY PROTON-DEPENDENT DRUG EFFLUX TRANSPORTER SUGE"/>
    <property type="match status" value="1"/>
</dbReference>
<dbReference type="PANTHER" id="PTHR30561:SF2">
    <property type="entry name" value="SPERMIDINE EXPORT PROTEIN MDTJ"/>
    <property type="match status" value="1"/>
</dbReference>
<dbReference type="Pfam" id="PF00893">
    <property type="entry name" value="Multi_Drug_Res"/>
    <property type="match status" value="1"/>
</dbReference>
<dbReference type="SUPFAM" id="SSF103481">
    <property type="entry name" value="Multidrug resistance efflux transporter EmrE"/>
    <property type="match status" value="1"/>
</dbReference>
<feature type="chain" id="PRO_0000331187" description="Spermidine export protein MdtJ">
    <location>
        <begin position="1"/>
        <end position="147"/>
    </location>
</feature>
<feature type="transmembrane region" description="Helical" evidence="1">
    <location>
        <begin position="1"/>
        <end position="21"/>
    </location>
</feature>
<feature type="transmembrane region" description="Helical" evidence="1">
    <location>
        <begin position="31"/>
        <end position="51"/>
    </location>
</feature>
<feature type="transmembrane region" description="Helical" evidence="1">
    <location>
        <begin position="54"/>
        <end position="74"/>
    </location>
</feature>
<feature type="transmembrane region" description="Helical" evidence="1">
    <location>
        <begin position="81"/>
        <end position="101"/>
    </location>
</feature>
<feature type="region of interest" description="Disordered" evidence="2">
    <location>
        <begin position="105"/>
        <end position="147"/>
    </location>
</feature>